<name>Y1075_MUSP7</name>
<proteinExistence type="inferred from homology"/>
<comment type="subcellular location">
    <subcellularLocation>
        <location evidence="1">Cell membrane</location>
        <topology evidence="1">Multi-pass membrane protein</topology>
    </subcellularLocation>
</comment>
<comment type="similarity">
    <text evidence="1">Belongs to the UPF0756 family.</text>
</comment>
<keyword id="KW-1003">Cell membrane</keyword>
<keyword id="KW-0472">Membrane</keyword>
<keyword id="KW-0812">Transmembrane</keyword>
<keyword id="KW-1133">Transmembrane helix</keyword>
<reference key="1">
    <citation type="submission" date="2009-06" db="EMBL/GenBank/DDBJ databases">
        <title>Complete sequence of Dickeya dadantii Ech703.</title>
        <authorList>
            <consortium name="US DOE Joint Genome Institute"/>
            <person name="Lucas S."/>
            <person name="Copeland A."/>
            <person name="Lapidus A."/>
            <person name="Glavina del Rio T."/>
            <person name="Dalin E."/>
            <person name="Tice H."/>
            <person name="Bruce D."/>
            <person name="Goodwin L."/>
            <person name="Pitluck S."/>
            <person name="Chertkov O."/>
            <person name="Brettin T."/>
            <person name="Detter J.C."/>
            <person name="Han C."/>
            <person name="Larimer F."/>
            <person name="Land M."/>
            <person name="Hauser L."/>
            <person name="Kyrpides N."/>
            <person name="Mikhailova N."/>
            <person name="Balakrishnan V."/>
            <person name="Glasner J."/>
            <person name="Perna N.T."/>
        </authorList>
    </citation>
    <scope>NUCLEOTIDE SEQUENCE [LARGE SCALE GENOMIC DNA]</scope>
    <source>
        <strain>Ech703</strain>
    </source>
</reference>
<protein>
    <recommendedName>
        <fullName evidence="1">UPF0756 membrane protein Dd703_1075</fullName>
    </recommendedName>
</protein>
<sequence>MASLDSPLLILLVLAVLGIVSHNMTITLAVLFLLVVRFTPLNHFFPWVEKYGLSFGILVLTIGVLAPIASGKIAASEVVQAFLNWKSLLAVIIGIAVSWLGGRGVSLMSNQPSVVAGLLVGTVIGVALLRGVPVGPLIAAGLLSLLIGKG</sequence>
<accession>C6CC69</accession>
<evidence type="ECO:0000255" key="1">
    <source>
        <dbReference type="HAMAP-Rule" id="MF_01874"/>
    </source>
</evidence>
<gene>
    <name type="ordered locus">Dd703_1075</name>
</gene>
<organism>
    <name type="scientific">Musicola paradisiaca (strain Ech703)</name>
    <name type="common">Dickeya paradisiaca</name>
    <name type="synonym">Dickeya dadantii</name>
    <dbReference type="NCBI Taxonomy" id="579405"/>
    <lineage>
        <taxon>Bacteria</taxon>
        <taxon>Pseudomonadati</taxon>
        <taxon>Pseudomonadota</taxon>
        <taxon>Gammaproteobacteria</taxon>
        <taxon>Enterobacterales</taxon>
        <taxon>Pectobacteriaceae</taxon>
        <taxon>Musicola</taxon>
    </lineage>
</organism>
<dbReference type="EMBL" id="CP001654">
    <property type="protein sequence ID" value="ACS84880.1"/>
    <property type="molecule type" value="Genomic_DNA"/>
</dbReference>
<dbReference type="RefSeq" id="WP_012764697.1">
    <property type="nucleotide sequence ID" value="NC_012880.1"/>
</dbReference>
<dbReference type="STRING" id="579405.Dd703_1075"/>
<dbReference type="KEGG" id="dda:Dd703_1075"/>
<dbReference type="eggNOG" id="COG2707">
    <property type="taxonomic scope" value="Bacteria"/>
</dbReference>
<dbReference type="HOGENOM" id="CLU_125889_0_0_6"/>
<dbReference type="Proteomes" id="UP000002734">
    <property type="component" value="Chromosome"/>
</dbReference>
<dbReference type="GO" id="GO:0005886">
    <property type="term" value="C:plasma membrane"/>
    <property type="evidence" value="ECO:0007669"/>
    <property type="project" value="UniProtKB-SubCell"/>
</dbReference>
<dbReference type="HAMAP" id="MF_01874">
    <property type="entry name" value="UPF0756"/>
    <property type="match status" value="1"/>
</dbReference>
<dbReference type="InterPro" id="IPR007382">
    <property type="entry name" value="UPF0756_TM"/>
</dbReference>
<dbReference type="PANTHER" id="PTHR38452">
    <property type="entry name" value="UPF0756 MEMBRANE PROTEIN YEAL"/>
    <property type="match status" value="1"/>
</dbReference>
<dbReference type="PANTHER" id="PTHR38452:SF1">
    <property type="entry name" value="UPF0756 MEMBRANE PROTEIN YEAL"/>
    <property type="match status" value="1"/>
</dbReference>
<dbReference type="Pfam" id="PF04284">
    <property type="entry name" value="DUF441"/>
    <property type="match status" value="1"/>
</dbReference>
<feature type="chain" id="PRO_0000388848" description="UPF0756 membrane protein Dd703_1075">
    <location>
        <begin position="1"/>
        <end position="150"/>
    </location>
</feature>
<feature type="transmembrane region" description="Helical" evidence="1">
    <location>
        <begin position="8"/>
        <end position="28"/>
    </location>
</feature>
<feature type="transmembrane region" description="Helical" evidence="1">
    <location>
        <begin position="51"/>
        <end position="71"/>
    </location>
</feature>
<feature type="transmembrane region" description="Helical" evidence="1">
    <location>
        <begin position="81"/>
        <end position="101"/>
    </location>
</feature>
<feature type="transmembrane region" description="Helical" evidence="1">
    <location>
        <begin position="114"/>
        <end position="134"/>
    </location>
</feature>